<protein>
    <recommendedName>
        <fullName evidence="1">UPF0114 protein YqhA</fullName>
    </recommendedName>
</protein>
<dbReference type="EMBL" id="CP000886">
    <property type="protein sequence ID" value="ABX69266.1"/>
    <property type="molecule type" value="Genomic_DNA"/>
</dbReference>
<dbReference type="RefSeq" id="WP_000439335.1">
    <property type="nucleotide sequence ID" value="NC_010102.1"/>
</dbReference>
<dbReference type="KEGG" id="spq:SPAB_03936"/>
<dbReference type="PATRIC" id="fig|1016998.12.peg.3709"/>
<dbReference type="HOGENOM" id="CLU_097887_1_1_6"/>
<dbReference type="BioCyc" id="SENT1016998:SPAB_RS15980-MONOMER"/>
<dbReference type="Proteomes" id="UP000008556">
    <property type="component" value="Chromosome"/>
</dbReference>
<dbReference type="GO" id="GO:0005886">
    <property type="term" value="C:plasma membrane"/>
    <property type="evidence" value="ECO:0007669"/>
    <property type="project" value="UniProtKB-SubCell"/>
</dbReference>
<dbReference type="HAMAP" id="MF_00143">
    <property type="entry name" value="UPF0114"/>
    <property type="match status" value="1"/>
</dbReference>
<dbReference type="InterPro" id="IPR005134">
    <property type="entry name" value="UPF0114"/>
</dbReference>
<dbReference type="InterPro" id="IPR020761">
    <property type="entry name" value="UPF0114_bac"/>
</dbReference>
<dbReference type="NCBIfam" id="TIGR00645">
    <property type="entry name" value="HI0507"/>
    <property type="match status" value="1"/>
</dbReference>
<dbReference type="PANTHER" id="PTHR38596">
    <property type="entry name" value="UPF0114 PROTEIN YQHA"/>
    <property type="match status" value="1"/>
</dbReference>
<dbReference type="PANTHER" id="PTHR38596:SF1">
    <property type="entry name" value="UPF0114 PROTEIN YQHA"/>
    <property type="match status" value="1"/>
</dbReference>
<dbReference type="Pfam" id="PF03350">
    <property type="entry name" value="UPF0114"/>
    <property type="match status" value="1"/>
</dbReference>
<organism>
    <name type="scientific">Salmonella paratyphi B (strain ATCC BAA-1250 / SPB7)</name>
    <dbReference type="NCBI Taxonomy" id="1016998"/>
    <lineage>
        <taxon>Bacteria</taxon>
        <taxon>Pseudomonadati</taxon>
        <taxon>Pseudomonadota</taxon>
        <taxon>Gammaproteobacteria</taxon>
        <taxon>Enterobacterales</taxon>
        <taxon>Enterobacteriaceae</taxon>
        <taxon>Salmonella</taxon>
    </lineage>
</organism>
<sequence length="164" mass="18504">MERFLENVMYASRWLLAPVYFGLSLALIALALKFFQEILHVLPNVFALAEADLILVLLSLVDMTLVGGLLVMVMFSGYENFVSQLDISAGKEKLNWLGKMDATSLKNKVAASIVAISSIHLLRVFMDAKNVPDNKLMWYVIIHLTFVLSAFVMGYLDRLTRHNH</sequence>
<comment type="subcellular location">
    <subcellularLocation>
        <location evidence="1">Cell membrane</location>
        <topology evidence="1">Multi-pass membrane protein</topology>
    </subcellularLocation>
</comment>
<comment type="similarity">
    <text evidence="1">Belongs to the UPF0114 family.</text>
</comment>
<evidence type="ECO:0000255" key="1">
    <source>
        <dbReference type="HAMAP-Rule" id="MF_00143"/>
    </source>
</evidence>
<gene>
    <name evidence="1" type="primary">yqhA</name>
    <name type="ordered locus">SPAB_03936</name>
</gene>
<proteinExistence type="inferred from homology"/>
<name>YQHA_SALPB</name>
<feature type="chain" id="PRO_1000076554" description="UPF0114 protein YqhA">
    <location>
        <begin position="1"/>
        <end position="164"/>
    </location>
</feature>
<feature type="transmembrane region" description="Helical" evidence="1">
    <location>
        <begin position="15"/>
        <end position="35"/>
    </location>
</feature>
<feature type="transmembrane region" description="Helical" evidence="1">
    <location>
        <begin position="53"/>
        <end position="73"/>
    </location>
</feature>
<feature type="transmembrane region" description="Helical" evidence="1">
    <location>
        <begin position="136"/>
        <end position="156"/>
    </location>
</feature>
<keyword id="KW-1003">Cell membrane</keyword>
<keyword id="KW-0472">Membrane</keyword>
<keyword id="KW-0812">Transmembrane</keyword>
<keyword id="KW-1133">Transmembrane helix</keyword>
<reference key="1">
    <citation type="submission" date="2007-11" db="EMBL/GenBank/DDBJ databases">
        <authorList>
            <consortium name="The Salmonella enterica serovar Paratyphi B Genome Sequencing Project"/>
            <person name="McClelland M."/>
            <person name="Sanderson E.K."/>
            <person name="Porwollik S."/>
            <person name="Spieth J."/>
            <person name="Clifton W.S."/>
            <person name="Fulton R."/>
            <person name="Cordes M."/>
            <person name="Wollam A."/>
            <person name="Shah N."/>
            <person name="Pepin K."/>
            <person name="Bhonagiri V."/>
            <person name="Nash W."/>
            <person name="Johnson M."/>
            <person name="Thiruvilangam P."/>
            <person name="Wilson R."/>
        </authorList>
    </citation>
    <scope>NUCLEOTIDE SEQUENCE [LARGE SCALE GENOMIC DNA]</scope>
    <source>
        <strain>ATCC BAA-1250 / SPB7</strain>
    </source>
</reference>
<accession>A9N4W6</accession>